<gene>
    <name evidence="1" type="primary">hemL</name>
    <name type="ordered locus">Tfu_2726</name>
</gene>
<feature type="chain" id="PRO_0000243634" description="Glutamate-1-semialdehyde 2,1-aminomutase">
    <location>
        <begin position="1"/>
        <end position="430"/>
    </location>
</feature>
<feature type="modified residue" description="N6-(pyridoxal phosphate)lysine" evidence="1">
    <location>
        <position position="267"/>
    </location>
</feature>
<evidence type="ECO:0000255" key="1">
    <source>
        <dbReference type="HAMAP-Rule" id="MF_00375"/>
    </source>
</evidence>
<sequence>MATHLKSHELFNRARSVIPGGVNSPVRAFKAVGGTPPFMVSGKGPYLTDADGNTYVDLICSWGPLILGHAHPAVVEALAKAAAQGTSYGAPTEAEVELAEEIVSRTPVEKVRLVNSGTEATMSAIRLARGATGRAKVVKFAGNYHGHVDALLAAAGSGVATFALPDSPGVTGASAADTIVLPYNDIAAVEAAFAEAGDEIACVIAEACPANMGVVPPRDGFNAKLREITARHGALLILDEVLTGFRVSPSGWYGLEGVAPDLMTFGKVMGGGLPAAAFGGRADLMDQLSPEGSVYQAGTLSGNPLATAAGLATLRNATPEVYAHIDAAAARVSAAVSEALTAEGVPHRIQHGGNLFTVFFTDTEVVDFDGARAQNTARYAAFFQAMLEQGVYLPPAAFEAWFFSAAHDDAALDRVVSALPAAAKAAAQVA</sequence>
<comment type="catalytic activity">
    <reaction evidence="1">
        <text>(S)-4-amino-5-oxopentanoate = 5-aminolevulinate</text>
        <dbReference type="Rhea" id="RHEA:14265"/>
        <dbReference type="ChEBI" id="CHEBI:57501"/>
        <dbReference type="ChEBI" id="CHEBI:356416"/>
        <dbReference type="EC" id="5.4.3.8"/>
    </reaction>
</comment>
<comment type="cofactor">
    <cofactor evidence="1">
        <name>pyridoxal 5'-phosphate</name>
        <dbReference type="ChEBI" id="CHEBI:597326"/>
    </cofactor>
</comment>
<comment type="pathway">
    <text evidence="1">Porphyrin-containing compound metabolism; protoporphyrin-IX biosynthesis; 5-aminolevulinate from L-glutamyl-tRNA(Glu): step 2/2.</text>
</comment>
<comment type="subunit">
    <text evidence="1">Homodimer.</text>
</comment>
<comment type="subcellular location">
    <subcellularLocation>
        <location evidence="1">Cytoplasm</location>
    </subcellularLocation>
</comment>
<comment type="similarity">
    <text evidence="1">Belongs to the class-III pyridoxal-phosphate-dependent aminotransferase family. HemL subfamily.</text>
</comment>
<dbReference type="EC" id="5.4.3.8" evidence="1"/>
<dbReference type="EMBL" id="CP000088">
    <property type="protein sequence ID" value="AAZ56759.1"/>
    <property type="molecule type" value="Genomic_DNA"/>
</dbReference>
<dbReference type="RefSeq" id="WP_011293149.1">
    <property type="nucleotide sequence ID" value="NC_007333.1"/>
</dbReference>
<dbReference type="SMR" id="Q47LB3"/>
<dbReference type="STRING" id="269800.Tfu_2726"/>
<dbReference type="KEGG" id="tfu:Tfu_2726"/>
<dbReference type="eggNOG" id="COG0001">
    <property type="taxonomic scope" value="Bacteria"/>
</dbReference>
<dbReference type="HOGENOM" id="CLU_016922_1_5_11"/>
<dbReference type="OrthoDB" id="4510254at2"/>
<dbReference type="UniPathway" id="UPA00251">
    <property type="reaction ID" value="UER00317"/>
</dbReference>
<dbReference type="GO" id="GO:0005737">
    <property type="term" value="C:cytoplasm"/>
    <property type="evidence" value="ECO:0007669"/>
    <property type="project" value="UniProtKB-SubCell"/>
</dbReference>
<dbReference type="GO" id="GO:0042286">
    <property type="term" value="F:glutamate-1-semialdehyde 2,1-aminomutase activity"/>
    <property type="evidence" value="ECO:0007669"/>
    <property type="project" value="UniProtKB-UniRule"/>
</dbReference>
<dbReference type="GO" id="GO:0030170">
    <property type="term" value="F:pyridoxal phosphate binding"/>
    <property type="evidence" value="ECO:0007669"/>
    <property type="project" value="InterPro"/>
</dbReference>
<dbReference type="GO" id="GO:0008483">
    <property type="term" value="F:transaminase activity"/>
    <property type="evidence" value="ECO:0007669"/>
    <property type="project" value="InterPro"/>
</dbReference>
<dbReference type="GO" id="GO:0006782">
    <property type="term" value="P:protoporphyrinogen IX biosynthetic process"/>
    <property type="evidence" value="ECO:0007669"/>
    <property type="project" value="UniProtKB-UniRule"/>
</dbReference>
<dbReference type="CDD" id="cd00610">
    <property type="entry name" value="OAT_like"/>
    <property type="match status" value="1"/>
</dbReference>
<dbReference type="FunFam" id="3.40.640.10:FF:000021">
    <property type="entry name" value="Glutamate-1-semialdehyde 2,1-aminomutase"/>
    <property type="match status" value="1"/>
</dbReference>
<dbReference type="Gene3D" id="3.90.1150.10">
    <property type="entry name" value="Aspartate Aminotransferase, domain 1"/>
    <property type="match status" value="1"/>
</dbReference>
<dbReference type="Gene3D" id="3.40.640.10">
    <property type="entry name" value="Type I PLP-dependent aspartate aminotransferase-like (Major domain)"/>
    <property type="match status" value="1"/>
</dbReference>
<dbReference type="HAMAP" id="MF_00375">
    <property type="entry name" value="HemL_aminotrans_3"/>
    <property type="match status" value="1"/>
</dbReference>
<dbReference type="InterPro" id="IPR004639">
    <property type="entry name" value="4pyrrol_synth_GluAld_NH2Trfase"/>
</dbReference>
<dbReference type="InterPro" id="IPR005814">
    <property type="entry name" value="Aminotrans_3"/>
</dbReference>
<dbReference type="InterPro" id="IPR049704">
    <property type="entry name" value="Aminotrans_3_PPA_site"/>
</dbReference>
<dbReference type="InterPro" id="IPR015424">
    <property type="entry name" value="PyrdxlP-dep_Trfase"/>
</dbReference>
<dbReference type="InterPro" id="IPR015421">
    <property type="entry name" value="PyrdxlP-dep_Trfase_major"/>
</dbReference>
<dbReference type="InterPro" id="IPR015422">
    <property type="entry name" value="PyrdxlP-dep_Trfase_small"/>
</dbReference>
<dbReference type="NCBIfam" id="TIGR00713">
    <property type="entry name" value="hemL"/>
    <property type="match status" value="1"/>
</dbReference>
<dbReference type="NCBIfam" id="NF000818">
    <property type="entry name" value="PRK00062.1"/>
    <property type="match status" value="1"/>
</dbReference>
<dbReference type="PANTHER" id="PTHR43713">
    <property type="entry name" value="GLUTAMATE-1-SEMIALDEHYDE 2,1-AMINOMUTASE"/>
    <property type="match status" value="1"/>
</dbReference>
<dbReference type="PANTHER" id="PTHR43713:SF3">
    <property type="entry name" value="GLUTAMATE-1-SEMIALDEHYDE 2,1-AMINOMUTASE 1, CHLOROPLASTIC-RELATED"/>
    <property type="match status" value="1"/>
</dbReference>
<dbReference type="Pfam" id="PF00202">
    <property type="entry name" value="Aminotran_3"/>
    <property type="match status" value="1"/>
</dbReference>
<dbReference type="SUPFAM" id="SSF53383">
    <property type="entry name" value="PLP-dependent transferases"/>
    <property type="match status" value="1"/>
</dbReference>
<dbReference type="PROSITE" id="PS00600">
    <property type="entry name" value="AA_TRANSFER_CLASS_3"/>
    <property type="match status" value="1"/>
</dbReference>
<accession>Q47LB3</accession>
<reference key="1">
    <citation type="journal article" date="2007" name="J. Bacteriol.">
        <title>Genome sequence and analysis of the soil cellulolytic actinomycete Thermobifida fusca YX.</title>
        <authorList>
            <person name="Lykidis A."/>
            <person name="Mavromatis K."/>
            <person name="Ivanova N."/>
            <person name="Anderson I."/>
            <person name="Land M."/>
            <person name="DiBartolo G."/>
            <person name="Martinez M."/>
            <person name="Lapidus A."/>
            <person name="Lucas S."/>
            <person name="Copeland A."/>
            <person name="Richardson P."/>
            <person name="Wilson D.B."/>
            <person name="Kyrpides N."/>
        </authorList>
    </citation>
    <scope>NUCLEOTIDE SEQUENCE [LARGE SCALE GENOMIC DNA]</scope>
    <source>
        <strain>YX</strain>
    </source>
</reference>
<name>GSA_THEFY</name>
<organism>
    <name type="scientific">Thermobifida fusca (strain YX)</name>
    <dbReference type="NCBI Taxonomy" id="269800"/>
    <lineage>
        <taxon>Bacteria</taxon>
        <taxon>Bacillati</taxon>
        <taxon>Actinomycetota</taxon>
        <taxon>Actinomycetes</taxon>
        <taxon>Streptosporangiales</taxon>
        <taxon>Nocardiopsidaceae</taxon>
        <taxon>Thermobifida</taxon>
    </lineage>
</organism>
<proteinExistence type="inferred from homology"/>
<keyword id="KW-0963">Cytoplasm</keyword>
<keyword id="KW-0413">Isomerase</keyword>
<keyword id="KW-0627">Porphyrin biosynthesis</keyword>
<keyword id="KW-0663">Pyridoxal phosphate</keyword>
<protein>
    <recommendedName>
        <fullName evidence="1">Glutamate-1-semialdehyde 2,1-aminomutase</fullName>
        <shortName evidence="1">GSA</shortName>
        <ecNumber evidence="1">5.4.3.8</ecNumber>
    </recommendedName>
    <alternativeName>
        <fullName evidence="1">Glutamate-1-semialdehyde aminotransferase</fullName>
        <shortName evidence="1">GSA-AT</shortName>
    </alternativeName>
</protein>